<accession>Q9E6S5</accession>
<evidence type="ECO:0000255" key="1">
    <source>
        <dbReference type="HAMAP-Rule" id="MF_04073"/>
    </source>
</evidence>
<evidence type="ECO:0000256" key="2">
    <source>
        <dbReference type="SAM" id="MobiDB-lite"/>
    </source>
</evidence>
<reference key="1">
    <citation type="journal article" date="2000" name="J. Gen. Virol.">
        <title>An aberrant genotype revealed in recombinant hepatitis B virus strains from Vietnam.</title>
        <authorList>
            <person name="Hannoun C."/>
            <person name="Norder H."/>
            <person name="Lindh M."/>
        </authorList>
    </citation>
    <scope>NUCLEOTIDE SEQUENCE [GENOMIC DNA]</scope>
</reference>
<reference key="2">
    <citation type="journal article" date="2007" name="World J. Gastroenterol.">
        <title>Hepatitis B virus replication.</title>
        <authorList>
            <person name="Beck J."/>
            <person name="Nassal M."/>
        </authorList>
    </citation>
    <scope>REVIEW</scope>
</reference>
<name>DPOL_HBVC0</name>
<organismHost>
    <name type="scientific">Homo sapiens</name>
    <name type="common">Human</name>
    <dbReference type="NCBI Taxonomy" id="9606"/>
</organismHost>
<organismHost>
    <name type="scientific">Pan troglodytes</name>
    <name type="common">Chimpanzee</name>
    <dbReference type="NCBI Taxonomy" id="9598"/>
</organismHost>
<keyword id="KW-0235">DNA replication</keyword>
<keyword id="KW-0238">DNA-binding</keyword>
<keyword id="KW-0239">DNA-directed DNA polymerase</keyword>
<keyword id="KW-0255">Endonuclease</keyword>
<keyword id="KW-0945">Host-virus interaction</keyword>
<keyword id="KW-0378">Hydrolase</keyword>
<keyword id="KW-1090">Inhibition of host innate immune response by virus</keyword>
<keyword id="KW-1113">Inhibition of host RLR pathway by virus</keyword>
<keyword id="KW-0460">Magnesium</keyword>
<keyword id="KW-0479">Metal-binding</keyword>
<keyword id="KW-0511">Multifunctional enzyme</keyword>
<keyword id="KW-0540">Nuclease</keyword>
<keyword id="KW-0548">Nucleotidyltransferase</keyword>
<keyword id="KW-0695">RNA-directed DNA polymerase</keyword>
<keyword id="KW-0808">Transferase</keyword>
<keyword id="KW-0899">Viral immunoevasion</keyword>
<gene>
    <name evidence="1" type="primary">P</name>
</gene>
<proteinExistence type="inferred from homology"/>
<dbReference type="EC" id="2.7.7.7" evidence="1"/>
<dbReference type="EC" id="2.7.7.49" evidence="1"/>
<dbReference type="EC" id="3.1.26.4" evidence="1"/>
<dbReference type="EMBL" id="AF241410">
    <property type="protein sequence ID" value="AAG17595.1"/>
    <property type="molecule type" value="Genomic_DNA"/>
</dbReference>
<dbReference type="Proteomes" id="UP000007920">
    <property type="component" value="Genome"/>
</dbReference>
<dbReference type="GO" id="GO:0003677">
    <property type="term" value="F:DNA binding"/>
    <property type="evidence" value="ECO:0007669"/>
    <property type="project" value="UniProtKB-UniRule"/>
</dbReference>
<dbReference type="GO" id="GO:0003887">
    <property type="term" value="F:DNA-directed DNA polymerase activity"/>
    <property type="evidence" value="ECO:0007669"/>
    <property type="project" value="UniProtKB-UniRule"/>
</dbReference>
<dbReference type="GO" id="GO:0046872">
    <property type="term" value="F:metal ion binding"/>
    <property type="evidence" value="ECO:0007669"/>
    <property type="project" value="UniProtKB-UniRule"/>
</dbReference>
<dbReference type="GO" id="GO:0003964">
    <property type="term" value="F:RNA-directed DNA polymerase activity"/>
    <property type="evidence" value="ECO:0007669"/>
    <property type="project" value="UniProtKB-UniRule"/>
</dbReference>
<dbReference type="GO" id="GO:0004523">
    <property type="term" value="F:RNA-DNA hybrid ribonuclease activity"/>
    <property type="evidence" value="ECO:0007669"/>
    <property type="project" value="UniProtKB-UniRule"/>
</dbReference>
<dbReference type="GO" id="GO:0006260">
    <property type="term" value="P:DNA replication"/>
    <property type="evidence" value="ECO:0007669"/>
    <property type="project" value="UniProtKB-UniRule"/>
</dbReference>
<dbReference type="GO" id="GO:0052170">
    <property type="term" value="P:symbiont-mediated suppression of host innate immune response"/>
    <property type="evidence" value="ECO:0007669"/>
    <property type="project" value="UniProtKB-UniRule"/>
</dbReference>
<dbReference type="FunFam" id="3.30.70.270:FF:000009">
    <property type="entry name" value="Protein P"/>
    <property type="match status" value="1"/>
</dbReference>
<dbReference type="Gene3D" id="3.30.70.270">
    <property type="match status" value="1"/>
</dbReference>
<dbReference type="HAMAP" id="MF_04073">
    <property type="entry name" value="HBV_DPOL"/>
    <property type="match status" value="1"/>
</dbReference>
<dbReference type="InterPro" id="IPR043502">
    <property type="entry name" value="DNA/RNA_pol_sf"/>
</dbReference>
<dbReference type="InterPro" id="IPR001462">
    <property type="entry name" value="DNApol_viral_C"/>
</dbReference>
<dbReference type="InterPro" id="IPR000201">
    <property type="entry name" value="DNApol_viral_N"/>
</dbReference>
<dbReference type="InterPro" id="IPR037531">
    <property type="entry name" value="HBV_DPOL"/>
</dbReference>
<dbReference type="InterPro" id="IPR043128">
    <property type="entry name" value="Rev_trsase/Diguanyl_cyclase"/>
</dbReference>
<dbReference type="InterPro" id="IPR000477">
    <property type="entry name" value="RT_dom"/>
</dbReference>
<dbReference type="InterPro" id="IPR051320">
    <property type="entry name" value="Viral_Replic_Matur_Polypro"/>
</dbReference>
<dbReference type="PANTHER" id="PTHR33064:SF29">
    <property type="entry name" value="PEPTIDASE A2 DOMAIN-CONTAINING PROTEIN-RELATED"/>
    <property type="match status" value="1"/>
</dbReference>
<dbReference type="PANTHER" id="PTHR33064">
    <property type="entry name" value="POL PROTEIN"/>
    <property type="match status" value="1"/>
</dbReference>
<dbReference type="Pfam" id="PF00336">
    <property type="entry name" value="DNA_pol_viral_C"/>
    <property type="match status" value="1"/>
</dbReference>
<dbReference type="Pfam" id="PF00242">
    <property type="entry name" value="DNA_pol_viral_N"/>
    <property type="match status" value="1"/>
</dbReference>
<dbReference type="Pfam" id="PF00078">
    <property type="entry name" value="RVT_1"/>
    <property type="match status" value="1"/>
</dbReference>
<dbReference type="SUPFAM" id="SSF56672">
    <property type="entry name" value="DNA/RNA polymerases"/>
    <property type="match status" value="1"/>
</dbReference>
<dbReference type="PROSITE" id="PS50878">
    <property type="entry name" value="RT_POL"/>
    <property type="match status" value="1"/>
</dbReference>
<organism>
    <name type="scientific">Hepatitis B virus genotype C (isolate Vietnam/3270/2000)</name>
    <name type="common">HBV-C</name>
    <dbReference type="NCBI Taxonomy" id="489472"/>
    <lineage>
        <taxon>Viruses</taxon>
        <taxon>Riboviria</taxon>
        <taxon>Pararnavirae</taxon>
        <taxon>Artverviricota</taxon>
        <taxon>Revtraviricetes</taxon>
        <taxon>Blubervirales</taxon>
        <taxon>Hepadnaviridae</taxon>
        <taxon>Orthohepadnavirus</taxon>
        <taxon>Hepatitis B virus</taxon>
        <taxon>hepatitis B virus genotype C</taxon>
    </lineage>
</organism>
<sequence>MPLSYQHFRKLLLLDDEAGPLEEELPRLADEGLNRRVAEDLNLGNLNVSIPWTHKVGNFTGLYSSTVPVFNSEWQTPSFPDIHLQEDIINRCQQFVGPLNVNEKRRLKLVMPARFFPNLTKYLPLDKGIKPYYPEHIVNHYFKTRHYLHTLWKAGILYKRETTRSASFCGSPYSWEQELQHGRLFFKTSKRHGDESFCSQSSGILARPSVGPCFRSQFKQSRLGLQPQQGPLARGLAGRSGSIRARVHPTTRQSFGVEPSGSGHIDNSASNSSSCLHQSAVRKAAYSHLSTSKRQSSSGHAVEFHNISSSSARSQSKGPILSCWWLQFRNSKPCSDYCLSHIVNLLEDWGPCTENGEHNIRIPRTPARVTGGVFLVDKNPHNTAESRLVVDFSQFSRGSTRVSWPKFAVPNLQSLTNLLSSNLSWLSLDVSAAFYHIPLHPAAMPHLLVGSSGLPRYVARLSSNSRNINNKHGTMQDLHDSCSRHLYVSLLLLYKTFGRKLHLYSHPIILGFRKIPMGVGLSPFLLAQFTSAICSVVRRAFPHCLAFSYMDDVVLGAKSVQHLESFFTSVTNFLLSLGIHLNPHKTKRWGYSLNFMGYVIGSWGTLPQEHIVLKIKKCFRKLPVNRPIDWKVCQRIVGLLGFAAPFTQCGYPALLPLYACIQAKQAFTFSPTYKAFLCKQYLNLYPVARQRSGLCQVFADATPTGWGLAMGHQRMRGTFVAPLPIHTAELLAACFARSRSGAKLIGTDNSVVLSRKYTSFPWLLGCAANWILRGTSFVYVPSALNPADDPSRGRLGLYRPLLRLPFRPTTGRTSLYAVSPSVPSHLPVRVHFASPLHVAWRPP</sequence>
<comment type="function">
    <text evidence="1">Multifunctional enzyme that converts the viral RNA genome into dsDNA in viral cytoplasmic capsids. This enzyme displays a DNA polymerase activity that can copy either DNA or RNA templates, and a ribonuclease H (RNase H) activity that cleaves the RNA strand of RNA-DNA heteroduplexes in a partially processive 3'- to 5'-endonucleasic mode. Neo-synthesized pregenomic RNA (pgRNA) are encapsidated together with the P protein, and reverse-transcribed inside the nucleocapsid. Initiation of reverse-transcription occurs first by binding the epsilon loop on the pgRNA genome, and is initiated by protein priming, thereby the 5'-end of (-)DNA is covalently linked to P protein. Partial (+)DNA is synthesized from the (-)DNA template and generates the relaxed circular DNA (RC-DNA) genome. After budding and infection, the RC-DNA migrates in the nucleus, and is converted into a plasmid-like covalently closed circular DNA (cccDNA). The activity of P protein does not seem to be necessary for cccDNA generation, and is presumably released from (+)DNA by host nuclear DNA repair machinery.</text>
</comment>
<comment type="catalytic activity">
    <reaction evidence="1">
        <text>DNA(n) + a 2'-deoxyribonucleoside 5'-triphosphate = DNA(n+1) + diphosphate</text>
        <dbReference type="Rhea" id="RHEA:22508"/>
        <dbReference type="Rhea" id="RHEA-COMP:17339"/>
        <dbReference type="Rhea" id="RHEA-COMP:17340"/>
        <dbReference type="ChEBI" id="CHEBI:33019"/>
        <dbReference type="ChEBI" id="CHEBI:61560"/>
        <dbReference type="ChEBI" id="CHEBI:173112"/>
        <dbReference type="EC" id="2.7.7.7"/>
    </reaction>
</comment>
<comment type="catalytic activity">
    <reaction evidence="1">
        <text>DNA(n) + a 2'-deoxyribonucleoside 5'-triphosphate = DNA(n+1) + diphosphate</text>
        <dbReference type="Rhea" id="RHEA:22508"/>
        <dbReference type="Rhea" id="RHEA-COMP:17339"/>
        <dbReference type="Rhea" id="RHEA-COMP:17340"/>
        <dbReference type="ChEBI" id="CHEBI:33019"/>
        <dbReference type="ChEBI" id="CHEBI:61560"/>
        <dbReference type="ChEBI" id="CHEBI:173112"/>
        <dbReference type="EC" id="2.7.7.49"/>
    </reaction>
</comment>
<comment type="catalytic activity">
    <reaction evidence="1">
        <text>Endonucleolytic cleavage to 5'-phosphomonoester.</text>
        <dbReference type="EC" id="3.1.26.4"/>
    </reaction>
</comment>
<comment type="activity regulation">
    <text evidence="1">Activated by host HSP70 and HSP40 in vitro to be able to bind the epsilon loop of the pgRNA. Because deletion of the RNase H region renders the protein partly chaperone-independent, the chaperones may be needed indirectly to relieve occlusion of the RNA-binding site by this domain. Inhibited by several reverse-transcriptase inhibitors: Lamivudine, Adefovir and Entecavir.</text>
</comment>
<comment type="domain">
    <text evidence="1">Terminal protein domain (TP) is hepadnavirus-specific. Spacer domain is highly variable and separates the TP and RT domains. Polymerase/reverse-transcriptase domain (RT) and ribonuclease H domain (RH) are similar to retrovirus reverse transcriptase/RNase H.</text>
</comment>
<comment type="domain">
    <text evidence="1">The polymerase/reverse transcriptase (RT) and ribonuclease H (RH) domains are structured in five subdomains: finger, palm, thumb, connection and RNase H. Within the palm subdomain, the 'primer grip' region is thought to be involved in the positioning of the primer terminus for accommodating the incoming nucleotide. The RH domain stabilizes the association of RT with primer-template.</text>
</comment>
<comment type="miscellaneous">
    <text evidence="1">Hepadnaviral virions contain probably just one P protein molecule per particle.</text>
</comment>
<comment type="similarity">
    <text evidence="1">Belongs to the hepadnaviridae P protein family.</text>
</comment>
<feature type="chain" id="PRO_0000323260" description="Protein P">
    <location>
        <begin position="1"/>
        <end position="843"/>
    </location>
</feature>
<feature type="domain" description="Reverse transcriptase" evidence="1">
    <location>
        <begin position="357"/>
        <end position="600"/>
    </location>
</feature>
<feature type="region of interest" description="Terminal protein domain (TP)" evidence="1">
    <location>
        <begin position="1"/>
        <end position="177"/>
    </location>
</feature>
<feature type="region of interest" description="Spacer" evidence="1">
    <location>
        <begin position="178"/>
        <end position="346"/>
    </location>
</feature>
<feature type="region of interest" description="Disordered" evidence="2">
    <location>
        <begin position="248"/>
        <end position="272"/>
    </location>
</feature>
<feature type="region of interest" description="Polymerase/reverse transcriptase domain (RT)" evidence="1">
    <location>
        <begin position="347"/>
        <end position="690"/>
    </location>
</feature>
<feature type="binding site" evidence="1">
    <location>
        <position position="429"/>
    </location>
    <ligand>
        <name>Mg(2+)</name>
        <dbReference type="ChEBI" id="CHEBI:18420"/>
        <note>catalytic</note>
    </ligand>
</feature>
<feature type="binding site" evidence="1">
    <location>
        <position position="551"/>
    </location>
    <ligand>
        <name>Mg(2+)</name>
        <dbReference type="ChEBI" id="CHEBI:18420"/>
        <note>catalytic</note>
    </ligand>
</feature>
<feature type="binding site" evidence="1">
    <location>
        <position position="552"/>
    </location>
    <ligand>
        <name>Mg(2+)</name>
        <dbReference type="ChEBI" id="CHEBI:18420"/>
        <note>catalytic</note>
    </ligand>
</feature>
<feature type="site" description="Priming of reverse-transcription by covalently linking the first nucleotide of the (-)DNA" evidence="1">
    <location>
        <position position="63"/>
    </location>
</feature>
<protein>
    <recommendedName>
        <fullName evidence="1">Protein P</fullName>
    </recommendedName>
    <domain>
        <recommendedName>
            <fullName evidence="1">DNA-directed DNA polymerase</fullName>
            <ecNumber evidence="1">2.7.7.7</ecNumber>
        </recommendedName>
    </domain>
    <domain>
        <recommendedName>
            <fullName evidence="1">RNA-directed DNA polymerase</fullName>
            <ecNumber evidence="1">2.7.7.49</ecNumber>
        </recommendedName>
    </domain>
    <domain>
        <recommendedName>
            <fullName evidence="1">Ribonuclease H</fullName>
            <ecNumber evidence="1">3.1.26.4</ecNumber>
        </recommendedName>
    </domain>
</protein>